<organism>
    <name type="scientific">Rhizobium meliloti (strain 1021)</name>
    <name type="common">Ensifer meliloti</name>
    <name type="synonym">Sinorhizobium meliloti</name>
    <dbReference type="NCBI Taxonomy" id="266834"/>
    <lineage>
        <taxon>Bacteria</taxon>
        <taxon>Pseudomonadati</taxon>
        <taxon>Pseudomonadota</taxon>
        <taxon>Alphaproteobacteria</taxon>
        <taxon>Hyphomicrobiales</taxon>
        <taxon>Rhizobiaceae</taxon>
        <taxon>Sinorhizobium/Ensifer group</taxon>
        <taxon>Sinorhizobium</taxon>
    </lineage>
</organism>
<accession>Q92TF0</accession>
<evidence type="ECO:0000255" key="1">
    <source>
        <dbReference type="HAMAP-Rule" id="MF_00222"/>
    </source>
</evidence>
<keyword id="KW-0028">Amino-acid biosynthesis</keyword>
<keyword id="KW-0057">Aromatic amino acid biosynthesis</keyword>
<keyword id="KW-0521">NADP</keyword>
<keyword id="KW-0560">Oxidoreductase</keyword>
<keyword id="KW-1185">Reference proteome</keyword>
<feature type="chain" id="PRO_0000136027" description="Shikimate dehydrogenase (NADP(+))">
    <location>
        <begin position="1"/>
        <end position="286"/>
    </location>
</feature>
<feature type="active site" description="Proton acceptor" evidence="1">
    <location>
        <position position="75"/>
    </location>
</feature>
<feature type="binding site" evidence="1">
    <location>
        <begin position="22"/>
        <end position="24"/>
    </location>
    <ligand>
        <name>shikimate</name>
        <dbReference type="ChEBI" id="CHEBI:36208"/>
    </ligand>
</feature>
<feature type="binding site" evidence="1">
    <location>
        <position position="71"/>
    </location>
    <ligand>
        <name>shikimate</name>
        <dbReference type="ChEBI" id="CHEBI:36208"/>
    </ligand>
</feature>
<feature type="binding site" evidence="1">
    <location>
        <position position="87"/>
    </location>
    <ligand>
        <name>NADP(+)</name>
        <dbReference type="ChEBI" id="CHEBI:58349"/>
    </ligand>
</feature>
<feature type="binding site" evidence="1">
    <location>
        <position position="96"/>
    </location>
    <ligand>
        <name>shikimate</name>
        <dbReference type="ChEBI" id="CHEBI:36208"/>
    </ligand>
</feature>
<feature type="binding site" evidence="1">
    <location>
        <position position="111"/>
    </location>
    <ligand>
        <name>shikimate</name>
        <dbReference type="ChEBI" id="CHEBI:36208"/>
    </ligand>
</feature>
<feature type="binding site" evidence="1">
    <location>
        <begin position="136"/>
        <end position="140"/>
    </location>
    <ligand>
        <name>NADP(+)</name>
        <dbReference type="ChEBI" id="CHEBI:58349"/>
    </ligand>
</feature>
<feature type="binding site" evidence="1">
    <location>
        <begin position="160"/>
        <end position="165"/>
    </location>
    <ligand>
        <name>NADP(+)</name>
        <dbReference type="ChEBI" id="CHEBI:58349"/>
    </ligand>
</feature>
<feature type="binding site" evidence="1">
    <location>
        <position position="225"/>
    </location>
    <ligand>
        <name>NADP(+)</name>
        <dbReference type="ChEBI" id="CHEBI:58349"/>
    </ligand>
</feature>
<feature type="binding site" evidence="1">
    <location>
        <position position="227"/>
    </location>
    <ligand>
        <name>shikimate</name>
        <dbReference type="ChEBI" id="CHEBI:36208"/>
    </ligand>
</feature>
<feature type="binding site" evidence="1">
    <location>
        <position position="248"/>
    </location>
    <ligand>
        <name>NADP(+)</name>
        <dbReference type="ChEBI" id="CHEBI:58349"/>
    </ligand>
</feature>
<gene>
    <name evidence="1" type="primary">aroE</name>
    <name type="ordered locus">R00003</name>
    <name type="ORF">SMc02791</name>
</gene>
<sequence>MHDSRETFVNHAFVTGYPVKHSRSPLIHGHWLKQFGIRGSYRAHEVTPEAFPDFMRQIKEGRTDFCGGNVTIPHKEAAFRLADRPDELSAELGAANTLWLENGKIRATNTDGRGFVANLDERAKGWDRISAAVILGAGGASRAVIQAIRDRGVKTIHVVNRTPERARELADRFGTAVHAHSMAALPEVVSGAGLFVNTTSLGMDGEPAPAIDFSGLAPDAVVTDIVYVPLKTPLLRQAEEQGFRIVDGLGMLLHQAVPGFEKWFGLRPVVDETLRQIIISDMDRHA</sequence>
<comment type="function">
    <text evidence="1">Involved in the biosynthesis of the chorismate, which leads to the biosynthesis of aromatic amino acids. Catalyzes the reversible NADPH linked reduction of 3-dehydroshikimate (DHSA) to yield shikimate (SA).</text>
</comment>
<comment type="catalytic activity">
    <reaction evidence="1">
        <text>shikimate + NADP(+) = 3-dehydroshikimate + NADPH + H(+)</text>
        <dbReference type="Rhea" id="RHEA:17737"/>
        <dbReference type="ChEBI" id="CHEBI:15378"/>
        <dbReference type="ChEBI" id="CHEBI:16630"/>
        <dbReference type="ChEBI" id="CHEBI:36208"/>
        <dbReference type="ChEBI" id="CHEBI:57783"/>
        <dbReference type="ChEBI" id="CHEBI:58349"/>
        <dbReference type="EC" id="1.1.1.25"/>
    </reaction>
</comment>
<comment type="pathway">
    <text evidence="1">Metabolic intermediate biosynthesis; chorismate biosynthesis; chorismate from D-erythrose 4-phosphate and phosphoenolpyruvate: step 4/7.</text>
</comment>
<comment type="subunit">
    <text evidence="1">Homodimer.</text>
</comment>
<comment type="similarity">
    <text evidence="1">Belongs to the shikimate dehydrogenase family.</text>
</comment>
<dbReference type="EC" id="1.1.1.25" evidence="1"/>
<dbReference type="EMBL" id="AL591688">
    <property type="protein sequence ID" value="CAC41390.1"/>
    <property type="molecule type" value="Genomic_DNA"/>
</dbReference>
<dbReference type="RefSeq" id="NP_384109.1">
    <property type="nucleotide sequence ID" value="NC_003047.1"/>
</dbReference>
<dbReference type="RefSeq" id="WP_010968287.1">
    <property type="nucleotide sequence ID" value="NC_003047.1"/>
</dbReference>
<dbReference type="SMR" id="Q92TF0"/>
<dbReference type="EnsemblBacteria" id="CAC41390">
    <property type="protein sequence ID" value="CAC41390"/>
    <property type="gene ID" value="SMc02791"/>
</dbReference>
<dbReference type="KEGG" id="sme:SMc02791"/>
<dbReference type="PATRIC" id="fig|266834.11.peg.1355"/>
<dbReference type="eggNOG" id="COG0169">
    <property type="taxonomic scope" value="Bacteria"/>
</dbReference>
<dbReference type="HOGENOM" id="CLU_044063_2_0_5"/>
<dbReference type="OrthoDB" id="9792692at2"/>
<dbReference type="UniPathway" id="UPA00053">
    <property type="reaction ID" value="UER00087"/>
</dbReference>
<dbReference type="Proteomes" id="UP000001976">
    <property type="component" value="Chromosome"/>
</dbReference>
<dbReference type="GO" id="GO:0005829">
    <property type="term" value="C:cytosol"/>
    <property type="evidence" value="ECO:0007669"/>
    <property type="project" value="TreeGrafter"/>
</dbReference>
<dbReference type="GO" id="GO:0050661">
    <property type="term" value="F:NADP binding"/>
    <property type="evidence" value="ECO:0007669"/>
    <property type="project" value="InterPro"/>
</dbReference>
<dbReference type="GO" id="GO:0004764">
    <property type="term" value="F:shikimate 3-dehydrogenase (NADP+) activity"/>
    <property type="evidence" value="ECO:0007669"/>
    <property type="project" value="UniProtKB-UniRule"/>
</dbReference>
<dbReference type="GO" id="GO:0008652">
    <property type="term" value="P:amino acid biosynthetic process"/>
    <property type="evidence" value="ECO:0007669"/>
    <property type="project" value="UniProtKB-KW"/>
</dbReference>
<dbReference type="GO" id="GO:0009073">
    <property type="term" value="P:aromatic amino acid family biosynthetic process"/>
    <property type="evidence" value="ECO:0007669"/>
    <property type="project" value="UniProtKB-KW"/>
</dbReference>
<dbReference type="GO" id="GO:0009423">
    <property type="term" value="P:chorismate biosynthetic process"/>
    <property type="evidence" value="ECO:0007669"/>
    <property type="project" value="UniProtKB-UniRule"/>
</dbReference>
<dbReference type="GO" id="GO:0019632">
    <property type="term" value="P:shikimate metabolic process"/>
    <property type="evidence" value="ECO:0007669"/>
    <property type="project" value="InterPro"/>
</dbReference>
<dbReference type="CDD" id="cd01065">
    <property type="entry name" value="NAD_bind_Shikimate_DH"/>
    <property type="match status" value="1"/>
</dbReference>
<dbReference type="Gene3D" id="3.40.50.10860">
    <property type="entry name" value="Leucine Dehydrogenase, chain A, domain 1"/>
    <property type="match status" value="1"/>
</dbReference>
<dbReference type="Gene3D" id="3.40.50.720">
    <property type="entry name" value="NAD(P)-binding Rossmann-like Domain"/>
    <property type="match status" value="1"/>
</dbReference>
<dbReference type="HAMAP" id="MF_00222">
    <property type="entry name" value="Shikimate_DH_AroE"/>
    <property type="match status" value="1"/>
</dbReference>
<dbReference type="InterPro" id="IPR046346">
    <property type="entry name" value="Aminoacid_DH-like_N_sf"/>
</dbReference>
<dbReference type="InterPro" id="IPR036291">
    <property type="entry name" value="NAD(P)-bd_dom_sf"/>
</dbReference>
<dbReference type="InterPro" id="IPR041121">
    <property type="entry name" value="SDH_C"/>
</dbReference>
<dbReference type="InterPro" id="IPR011342">
    <property type="entry name" value="Shikimate_DH"/>
</dbReference>
<dbReference type="InterPro" id="IPR013708">
    <property type="entry name" value="Shikimate_DH-bd_N"/>
</dbReference>
<dbReference type="InterPro" id="IPR022893">
    <property type="entry name" value="Shikimate_DH_fam"/>
</dbReference>
<dbReference type="InterPro" id="IPR006151">
    <property type="entry name" value="Shikm_DH/Glu-tRNA_Rdtase"/>
</dbReference>
<dbReference type="NCBIfam" id="TIGR00507">
    <property type="entry name" value="aroE"/>
    <property type="match status" value="1"/>
</dbReference>
<dbReference type="NCBIfam" id="NF001312">
    <property type="entry name" value="PRK00258.1-4"/>
    <property type="match status" value="1"/>
</dbReference>
<dbReference type="PANTHER" id="PTHR21089:SF1">
    <property type="entry name" value="BIFUNCTIONAL 3-DEHYDROQUINATE DEHYDRATASE_SHIKIMATE DEHYDROGENASE, CHLOROPLASTIC"/>
    <property type="match status" value="1"/>
</dbReference>
<dbReference type="PANTHER" id="PTHR21089">
    <property type="entry name" value="SHIKIMATE DEHYDROGENASE"/>
    <property type="match status" value="1"/>
</dbReference>
<dbReference type="Pfam" id="PF18317">
    <property type="entry name" value="SDH_C"/>
    <property type="match status" value="1"/>
</dbReference>
<dbReference type="Pfam" id="PF01488">
    <property type="entry name" value="Shikimate_DH"/>
    <property type="match status" value="1"/>
</dbReference>
<dbReference type="Pfam" id="PF08501">
    <property type="entry name" value="Shikimate_dh_N"/>
    <property type="match status" value="1"/>
</dbReference>
<dbReference type="SUPFAM" id="SSF53223">
    <property type="entry name" value="Aminoacid dehydrogenase-like, N-terminal domain"/>
    <property type="match status" value="1"/>
</dbReference>
<dbReference type="SUPFAM" id="SSF51735">
    <property type="entry name" value="NAD(P)-binding Rossmann-fold domains"/>
    <property type="match status" value="1"/>
</dbReference>
<proteinExistence type="inferred from homology"/>
<name>AROE_RHIME</name>
<reference key="1">
    <citation type="journal article" date="2001" name="Proc. Natl. Acad. Sci. U.S.A.">
        <title>Analysis of the chromosome sequence of the legume symbiont Sinorhizobium meliloti strain 1021.</title>
        <authorList>
            <person name="Capela D."/>
            <person name="Barloy-Hubler F."/>
            <person name="Gouzy J."/>
            <person name="Bothe G."/>
            <person name="Ampe F."/>
            <person name="Batut J."/>
            <person name="Boistard P."/>
            <person name="Becker A."/>
            <person name="Boutry M."/>
            <person name="Cadieu E."/>
            <person name="Dreano S."/>
            <person name="Gloux S."/>
            <person name="Godrie T."/>
            <person name="Goffeau A."/>
            <person name="Kahn D."/>
            <person name="Kiss E."/>
            <person name="Lelaure V."/>
            <person name="Masuy D."/>
            <person name="Pohl T."/>
            <person name="Portetelle D."/>
            <person name="Puehler A."/>
            <person name="Purnelle B."/>
            <person name="Ramsperger U."/>
            <person name="Renard C."/>
            <person name="Thebault P."/>
            <person name="Vandenbol M."/>
            <person name="Weidner S."/>
            <person name="Galibert F."/>
        </authorList>
    </citation>
    <scope>NUCLEOTIDE SEQUENCE [LARGE SCALE GENOMIC DNA]</scope>
    <source>
        <strain>1021</strain>
    </source>
</reference>
<reference key="2">
    <citation type="journal article" date="2001" name="Science">
        <title>The composite genome of the legume symbiont Sinorhizobium meliloti.</title>
        <authorList>
            <person name="Galibert F."/>
            <person name="Finan T.M."/>
            <person name="Long S.R."/>
            <person name="Puehler A."/>
            <person name="Abola P."/>
            <person name="Ampe F."/>
            <person name="Barloy-Hubler F."/>
            <person name="Barnett M.J."/>
            <person name="Becker A."/>
            <person name="Boistard P."/>
            <person name="Bothe G."/>
            <person name="Boutry M."/>
            <person name="Bowser L."/>
            <person name="Buhrmester J."/>
            <person name="Cadieu E."/>
            <person name="Capela D."/>
            <person name="Chain P."/>
            <person name="Cowie A."/>
            <person name="Davis R.W."/>
            <person name="Dreano S."/>
            <person name="Federspiel N.A."/>
            <person name="Fisher R.F."/>
            <person name="Gloux S."/>
            <person name="Godrie T."/>
            <person name="Goffeau A."/>
            <person name="Golding B."/>
            <person name="Gouzy J."/>
            <person name="Gurjal M."/>
            <person name="Hernandez-Lucas I."/>
            <person name="Hong A."/>
            <person name="Huizar L."/>
            <person name="Hyman R.W."/>
            <person name="Jones T."/>
            <person name="Kahn D."/>
            <person name="Kahn M.L."/>
            <person name="Kalman S."/>
            <person name="Keating D.H."/>
            <person name="Kiss E."/>
            <person name="Komp C."/>
            <person name="Lelaure V."/>
            <person name="Masuy D."/>
            <person name="Palm C."/>
            <person name="Peck M.C."/>
            <person name="Pohl T.M."/>
            <person name="Portetelle D."/>
            <person name="Purnelle B."/>
            <person name="Ramsperger U."/>
            <person name="Surzycki R."/>
            <person name="Thebault P."/>
            <person name="Vandenbol M."/>
            <person name="Vorhoelter F.J."/>
            <person name="Weidner S."/>
            <person name="Wells D.H."/>
            <person name="Wong K."/>
            <person name="Yeh K.-C."/>
            <person name="Batut J."/>
        </authorList>
    </citation>
    <scope>NUCLEOTIDE SEQUENCE [LARGE SCALE GENOMIC DNA]</scope>
    <source>
        <strain>1021</strain>
    </source>
</reference>
<protein>
    <recommendedName>
        <fullName evidence="1">Shikimate dehydrogenase (NADP(+))</fullName>
        <shortName evidence="1">SDH</shortName>
        <ecNumber evidence="1">1.1.1.25</ecNumber>
    </recommendedName>
</protein>